<evidence type="ECO:0000255" key="1">
    <source>
        <dbReference type="PROSITE-ProRule" id="PRU00291"/>
    </source>
</evidence>
<evidence type="ECO:0000256" key="2">
    <source>
        <dbReference type="SAM" id="MobiDB-lite"/>
    </source>
</evidence>
<evidence type="ECO:0000269" key="3">
    <source>
    </source>
</evidence>
<evidence type="ECO:0000305" key="4"/>
<gene>
    <name type="primary">LBD1</name>
    <name type="synonym">ASL8</name>
    <name type="ordered locus">At1g07900</name>
    <name type="ORF">F24B9.1</name>
</gene>
<reference key="1">
    <citation type="journal article" date="2009" name="Plant J.">
        <title>Characterization of genes in the ASYMMETRIC LEAVES2/LATERAL ORGAN BOUNDARIES (AS2/LOB) family in Arabidopsis thaliana, and functional and molecular comparisons between AS2 and other family members.</title>
        <authorList>
            <person name="Matsumura Y."/>
            <person name="Iwakawa H."/>
            <person name="Machida Y."/>
            <person name="Machida C."/>
        </authorList>
    </citation>
    <scope>NUCLEOTIDE SEQUENCE [MRNA]</scope>
    <source>
        <strain>cv. Columbia</strain>
    </source>
</reference>
<reference key="2">
    <citation type="journal article" date="2000" name="Nature">
        <title>Sequence and analysis of chromosome 1 of the plant Arabidopsis thaliana.</title>
        <authorList>
            <person name="Theologis A."/>
            <person name="Ecker J.R."/>
            <person name="Palm C.J."/>
            <person name="Federspiel N.A."/>
            <person name="Kaul S."/>
            <person name="White O."/>
            <person name="Alonso J."/>
            <person name="Altafi H."/>
            <person name="Araujo R."/>
            <person name="Bowman C.L."/>
            <person name="Brooks S.Y."/>
            <person name="Buehler E."/>
            <person name="Chan A."/>
            <person name="Chao Q."/>
            <person name="Chen H."/>
            <person name="Cheuk R.F."/>
            <person name="Chin C.W."/>
            <person name="Chung M.K."/>
            <person name="Conn L."/>
            <person name="Conway A.B."/>
            <person name="Conway A.R."/>
            <person name="Creasy T.H."/>
            <person name="Dewar K."/>
            <person name="Dunn P."/>
            <person name="Etgu P."/>
            <person name="Feldblyum T.V."/>
            <person name="Feng J.-D."/>
            <person name="Fong B."/>
            <person name="Fujii C.Y."/>
            <person name="Gill J.E."/>
            <person name="Goldsmith A.D."/>
            <person name="Haas B."/>
            <person name="Hansen N.F."/>
            <person name="Hughes B."/>
            <person name="Huizar L."/>
            <person name="Hunter J.L."/>
            <person name="Jenkins J."/>
            <person name="Johnson-Hopson C."/>
            <person name="Khan S."/>
            <person name="Khaykin E."/>
            <person name="Kim C.J."/>
            <person name="Koo H.L."/>
            <person name="Kremenetskaia I."/>
            <person name="Kurtz D.B."/>
            <person name="Kwan A."/>
            <person name="Lam B."/>
            <person name="Langin-Hooper S."/>
            <person name="Lee A."/>
            <person name="Lee J.M."/>
            <person name="Lenz C.A."/>
            <person name="Li J.H."/>
            <person name="Li Y.-P."/>
            <person name="Lin X."/>
            <person name="Liu S.X."/>
            <person name="Liu Z.A."/>
            <person name="Luros J.S."/>
            <person name="Maiti R."/>
            <person name="Marziali A."/>
            <person name="Militscher J."/>
            <person name="Miranda M."/>
            <person name="Nguyen M."/>
            <person name="Nierman W.C."/>
            <person name="Osborne B.I."/>
            <person name="Pai G."/>
            <person name="Peterson J."/>
            <person name="Pham P.K."/>
            <person name="Rizzo M."/>
            <person name="Rooney T."/>
            <person name="Rowley D."/>
            <person name="Sakano H."/>
            <person name="Salzberg S.L."/>
            <person name="Schwartz J.R."/>
            <person name="Shinn P."/>
            <person name="Southwick A.M."/>
            <person name="Sun H."/>
            <person name="Tallon L.J."/>
            <person name="Tambunga G."/>
            <person name="Toriumi M.J."/>
            <person name="Town C.D."/>
            <person name="Utterback T."/>
            <person name="Van Aken S."/>
            <person name="Vaysberg M."/>
            <person name="Vysotskaia V.S."/>
            <person name="Walker M."/>
            <person name="Wu D."/>
            <person name="Yu G."/>
            <person name="Fraser C.M."/>
            <person name="Venter J.C."/>
            <person name="Davis R.W."/>
        </authorList>
    </citation>
    <scope>NUCLEOTIDE SEQUENCE [LARGE SCALE GENOMIC DNA]</scope>
    <source>
        <strain>cv. Columbia</strain>
    </source>
</reference>
<reference key="3">
    <citation type="journal article" date="2017" name="Plant J.">
        <title>Araport11: a complete reannotation of the Arabidopsis thaliana reference genome.</title>
        <authorList>
            <person name="Cheng C.Y."/>
            <person name="Krishnakumar V."/>
            <person name="Chan A.P."/>
            <person name="Thibaud-Nissen F."/>
            <person name="Schobel S."/>
            <person name="Town C.D."/>
        </authorList>
    </citation>
    <scope>GENOME REANNOTATION</scope>
    <source>
        <strain>cv. Columbia</strain>
    </source>
</reference>
<reference key="4">
    <citation type="journal article" date="2002" name="Plant Physiol.">
        <title>The LATERAL ORGAN BOUNDARIES gene defines a novel, plant-specific gene family.</title>
        <authorList>
            <person name="Shuai B."/>
            <person name="Reynaga-Pena C.G."/>
            <person name="Springer P.S."/>
        </authorList>
    </citation>
    <scope>TISSUE SPECIFICITY</scope>
    <scope>GENE FAMILY</scope>
    <scope>NOMENCLATURE</scope>
</reference>
<reference key="5">
    <citation type="journal article" date="2002" name="Plant Cell Physiol.">
        <title>The ASYMMETRIC LEAVES2 gene of Arabidopsis thaliana, required for formation of a symmetric flat leaf lamina, encodes a member of a novel family of proteins characterized by cysteine repeats and a leucine zipper.</title>
        <authorList>
            <person name="Iwakawa H."/>
            <person name="Ueno Y."/>
            <person name="Semiarti E."/>
            <person name="Onouchi H."/>
            <person name="Kojima S."/>
            <person name="Tsukaya H."/>
            <person name="Hasebe M."/>
            <person name="Soma T."/>
            <person name="Ikezaki M."/>
            <person name="Machida C."/>
            <person name="Machida Y."/>
        </authorList>
    </citation>
    <scope>GENE FAMILY</scope>
    <scope>NOMENCLATURE</scope>
</reference>
<organism>
    <name type="scientific">Arabidopsis thaliana</name>
    <name type="common">Mouse-ear cress</name>
    <dbReference type="NCBI Taxonomy" id="3702"/>
    <lineage>
        <taxon>Eukaryota</taxon>
        <taxon>Viridiplantae</taxon>
        <taxon>Streptophyta</taxon>
        <taxon>Embryophyta</taxon>
        <taxon>Tracheophyta</taxon>
        <taxon>Spermatophyta</taxon>
        <taxon>Magnoliopsida</taxon>
        <taxon>eudicotyledons</taxon>
        <taxon>Gunneridae</taxon>
        <taxon>Pentapetalae</taxon>
        <taxon>rosids</taxon>
        <taxon>malvids</taxon>
        <taxon>Brassicales</taxon>
        <taxon>Brassicaceae</taxon>
        <taxon>Camelineae</taxon>
        <taxon>Arabidopsis</taxon>
    </lineage>
</organism>
<protein>
    <recommendedName>
        <fullName>LOB domain-containing protein 1</fullName>
    </recommendedName>
    <alternativeName>
        <fullName>ASYMMETRIC LEAVES 2-like protein 8</fullName>
        <shortName>AS2-like protein 8</shortName>
    </alternativeName>
</protein>
<name>LBD1_ARATH</name>
<accession>Q9LQR0</accession>
<accession>B7XG62</accession>
<comment type="tissue specificity">
    <text evidence="3">Expressed in young shoots, roots, stems, leaves and flowers.</text>
</comment>
<comment type="similarity">
    <text evidence="4">Belongs to the LOB domain-containing protein family.</text>
</comment>
<feature type="chain" id="PRO_0000132252" description="LOB domain-containing protein 1">
    <location>
        <begin position="1"/>
        <end position="190"/>
    </location>
</feature>
<feature type="domain" description="LOB" evidence="1">
    <location>
        <begin position="32"/>
        <end position="133"/>
    </location>
</feature>
<feature type="region of interest" description="Disordered" evidence="2">
    <location>
        <begin position="1"/>
        <end position="27"/>
    </location>
</feature>
<feature type="compositionally biased region" description="Polar residues" evidence="2">
    <location>
        <begin position="1"/>
        <end position="11"/>
    </location>
</feature>
<sequence>MESKSDASVATTPIISSSSSPPPSLSPRVVLSPCAACKILRRRCAERCVLAPYFPPTDPAKFTIAHRVFGASNIIKFLQELPESQRTDAVNSMVYEAEARIRDPVYGCAGAIYHLQRQVSELQAQLAKAQVEMVNMQFQRSNLLELIYNMDQQQKQEQDNMSFESNDLGFLEDKSNTNSSMLWWDPLWTC</sequence>
<dbReference type="EMBL" id="AB473841">
    <property type="protein sequence ID" value="BAH10552.1"/>
    <property type="molecule type" value="mRNA"/>
</dbReference>
<dbReference type="EMBL" id="AC007583">
    <property type="protein sequence ID" value="AAF75065.1"/>
    <property type="molecule type" value="Genomic_DNA"/>
</dbReference>
<dbReference type="EMBL" id="CP002684">
    <property type="protein sequence ID" value="AEE28208.1"/>
    <property type="molecule type" value="Genomic_DNA"/>
</dbReference>
<dbReference type="PIR" id="E86214">
    <property type="entry name" value="E86214"/>
</dbReference>
<dbReference type="RefSeq" id="NP_172268.1">
    <property type="nucleotide sequence ID" value="NM_100664.5"/>
</dbReference>
<dbReference type="SMR" id="Q9LQR0"/>
<dbReference type="BioGRID" id="22546">
    <property type="interactions" value="2"/>
</dbReference>
<dbReference type="STRING" id="3702.Q9LQR0"/>
<dbReference type="PaxDb" id="3702-AT1G07900.1"/>
<dbReference type="ProteomicsDB" id="237151"/>
<dbReference type="EnsemblPlants" id="AT1G07900.1">
    <property type="protein sequence ID" value="AT1G07900.1"/>
    <property type="gene ID" value="AT1G07900"/>
</dbReference>
<dbReference type="GeneID" id="837305"/>
<dbReference type="Gramene" id="AT1G07900.1">
    <property type="protein sequence ID" value="AT1G07900.1"/>
    <property type="gene ID" value="AT1G07900"/>
</dbReference>
<dbReference type="KEGG" id="ath:AT1G07900"/>
<dbReference type="Araport" id="AT1G07900"/>
<dbReference type="TAIR" id="AT1G07900">
    <property type="gene designation" value="LBD1"/>
</dbReference>
<dbReference type="eggNOG" id="ENOG502QV36">
    <property type="taxonomic scope" value="Eukaryota"/>
</dbReference>
<dbReference type="HOGENOM" id="CLU_058353_4_0_1"/>
<dbReference type="InParanoid" id="Q9LQR0"/>
<dbReference type="OMA" id="NSSMLWW"/>
<dbReference type="PhylomeDB" id="Q9LQR0"/>
<dbReference type="PRO" id="PR:Q9LQR0"/>
<dbReference type="Proteomes" id="UP000006548">
    <property type="component" value="Chromosome 1"/>
</dbReference>
<dbReference type="ExpressionAtlas" id="Q9LQR0">
    <property type="expression patterns" value="baseline and differential"/>
</dbReference>
<dbReference type="GO" id="GO:0005739">
    <property type="term" value="C:mitochondrion"/>
    <property type="evidence" value="ECO:0007005"/>
    <property type="project" value="TAIR"/>
</dbReference>
<dbReference type="InterPro" id="IPR004883">
    <property type="entry name" value="LOB"/>
</dbReference>
<dbReference type="PANTHER" id="PTHR31301:SF206">
    <property type="entry name" value="LOB DOMAIN-CONTAINING PROTEIN 1"/>
    <property type="match status" value="1"/>
</dbReference>
<dbReference type="PANTHER" id="PTHR31301">
    <property type="entry name" value="LOB DOMAIN-CONTAINING PROTEIN 4-RELATED"/>
    <property type="match status" value="1"/>
</dbReference>
<dbReference type="Pfam" id="PF03195">
    <property type="entry name" value="LOB"/>
    <property type="match status" value="1"/>
</dbReference>
<dbReference type="PROSITE" id="PS50891">
    <property type="entry name" value="LOB"/>
    <property type="match status" value="1"/>
</dbReference>
<keyword id="KW-1185">Reference proteome</keyword>
<proteinExistence type="evidence at transcript level"/>